<name>HSLU_XANC8</name>
<organism>
    <name type="scientific">Xanthomonas campestris pv. campestris (strain 8004)</name>
    <dbReference type="NCBI Taxonomy" id="314565"/>
    <lineage>
        <taxon>Bacteria</taxon>
        <taxon>Pseudomonadati</taxon>
        <taxon>Pseudomonadota</taxon>
        <taxon>Gammaproteobacteria</taxon>
        <taxon>Lysobacterales</taxon>
        <taxon>Lysobacteraceae</taxon>
        <taxon>Xanthomonas</taxon>
    </lineage>
</organism>
<keyword id="KW-0067">ATP-binding</keyword>
<keyword id="KW-0143">Chaperone</keyword>
<keyword id="KW-0963">Cytoplasm</keyword>
<keyword id="KW-0547">Nucleotide-binding</keyword>
<feature type="chain" id="PRO_1000012829" description="ATP-dependent protease ATPase subunit HslU">
    <location>
        <begin position="1"/>
        <end position="455"/>
    </location>
</feature>
<feature type="binding site" evidence="1">
    <location>
        <position position="23"/>
    </location>
    <ligand>
        <name>ATP</name>
        <dbReference type="ChEBI" id="CHEBI:30616"/>
    </ligand>
</feature>
<feature type="binding site" evidence="1">
    <location>
        <begin position="65"/>
        <end position="70"/>
    </location>
    <ligand>
        <name>ATP</name>
        <dbReference type="ChEBI" id="CHEBI:30616"/>
    </ligand>
</feature>
<feature type="binding site" evidence="1">
    <location>
        <position position="266"/>
    </location>
    <ligand>
        <name>ATP</name>
        <dbReference type="ChEBI" id="CHEBI:30616"/>
    </ligand>
</feature>
<feature type="binding site" evidence="1">
    <location>
        <position position="333"/>
    </location>
    <ligand>
        <name>ATP</name>
        <dbReference type="ChEBI" id="CHEBI:30616"/>
    </ligand>
</feature>
<feature type="binding site" evidence="1">
    <location>
        <position position="405"/>
    </location>
    <ligand>
        <name>ATP</name>
        <dbReference type="ChEBI" id="CHEBI:30616"/>
    </ligand>
</feature>
<comment type="function">
    <text evidence="1">ATPase subunit of a proteasome-like degradation complex; this subunit has chaperone activity. The binding of ATP and its subsequent hydrolysis by HslU are essential for unfolding of protein substrates subsequently hydrolyzed by HslV. HslU recognizes the N-terminal part of its protein substrates and unfolds these before they are guided to HslV for hydrolysis.</text>
</comment>
<comment type="subunit">
    <text evidence="1">A double ring-shaped homohexamer of HslV is capped on each side by a ring-shaped HslU homohexamer. The assembly of the HslU/HslV complex is dependent on binding of ATP.</text>
</comment>
<comment type="subcellular location">
    <subcellularLocation>
        <location evidence="1">Cytoplasm</location>
    </subcellularLocation>
</comment>
<comment type="similarity">
    <text evidence="1">Belongs to the ClpX chaperone family. HslU subfamily.</text>
</comment>
<accession>Q4UYX6</accession>
<dbReference type="EMBL" id="CP000050">
    <property type="protein sequence ID" value="AAY47747.1"/>
    <property type="molecule type" value="Genomic_DNA"/>
</dbReference>
<dbReference type="RefSeq" id="WP_011038587.1">
    <property type="nucleotide sequence ID" value="NZ_CP155948.1"/>
</dbReference>
<dbReference type="SMR" id="Q4UYX6"/>
<dbReference type="KEGG" id="xcb:XC_0668"/>
<dbReference type="HOGENOM" id="CLU_033123_0_0_6"/>
<dbReference type="Proteomes" id="UP000000420">
    <property type="component" value="Chromosome"/>
</dbReference>
<dbReference type="GO" id="GO:0009376">
    <property type="term" value="C:HslUV protease complex"/>
    <property type="evidence" value="ECO:0007669"/>
    <property type="project" value="UniProtKB-UniRule"/>
</dbReference>
<dbReference type="GO" id="GO:0005524">
    <property type="term" value="F:ATP binding"/>
    <property type="evidence" value="ECO:0007669"/>
    <property type="project" value="UniProtKB-UniRule"/>
</dbReference>
<dbReference type="GO" id="GO:0016887">
    <property type="term" value="F:ATP hydrolysis activity"/>
    <property type="evidence" value="ECO:0007669"/>
    <property type="project" value="InterPro"/>
</dbReference>
<dbReference type="GO" id="GO:0008233">
    <property type="term" value="F:peptidase activity"/>
    <property type="evidence" value="ECO:0007669"/>
    <property type="project" value="InterPro"/>
</dbReference>
<dbReference type="GO" id="GO:0036402">
    <property type="term" value="F:proteasome-activating activity"/>
    <property type="evidence" value="ECO:0007669"/>
    <property type="project" value="UniProtKB-UniRule"/>
</dbReference>
<dbReference type="GO" id="GO:0043335">
    <property type="term" value="P:protein unfolding"/>
    <property type="evidence" value="ECO:0007669"/>
    <property type="project" value="UniProtKB-UniRule"/>
</dbReference>
<dbReference type="GO" id="GO:0051603">
    <property type="term" value="P:proteolysis involved in protein catabolic process"/>
    <property type="evidence" value="ECO:0007669"/>
    <property type="project" value="TreeGrafter"/>
</dbReference>
<dbReference type="CDD" id="cd19498">
    <property type="entry name" value="RecA-like_HslU"/>
    <property type="match status" value="1"/>
</dbReference>
<dbReference type="FunFam" id="3.40.50.300:FF:000213">
    <property type="entry name" value="ATP-dependent protease ATPase subunit HslU"/>
    <property type="match status" value="1"/>
</dbReference>
<dbReference type="FunFam" id="3.40.50.300:FF:000220">
    <property type="entry name" value="ATP-dependent protease ATPase subunit HslU"/>
    <property type="match status" value="1"/>
</dbReference>
<dbReference type="Gene3D" id="1.10.8.60">
    <property type="match status" value="1"/>
</dbReference>
<dbReference type="Gene3D" id="1.10.8.10">
    <property type="entry name" value="DNA helicase RuvA subunit, C-terminal domain"/>
    <property type="match status" value="2"/>
</dbReference>
<dbReference type="Gene3D" id="3.40.50.300">
    <property type="entry name" value="P-loop containing nucleotide triphosphate hydrolases"/>
    <property type="match status" value="2"/>
</dbReference>
<dbReference type="HAMAP" id="MF_00249">
    <property type="entry name" value="HslU"/>
    <property type="match status" value="1"/>
</dbReference>
<dbReference type="InterPro" id="IPR003593">
    <property type="entry name" value="AAA+_ATPase"/>
</dbReference>
<dbReference type="InterPro" id="IPR050052">
    <property type="entry name" value="ATP-dep_Clp_protease_ClpX"/>
</dbReference>
<dbReference type="InterPro" id="IPR003959">
    <property type="entry name" value="ATPase_AAA_core"/>
</dbReference>
<dbReference type="InterPro" id="IPR019489">
    <property type="entry name" value="Clp_ATPase_C"/>
</dbReference>
<dbReference type="InterPro" id="IPR004491">
    <property type="entry name" value="HslU"/>
</dbReference>
<dbReference type="InterPro" id="IPR027417">
    <property type="entry name" value="P-loop_NTPase"/>
</dbReference>
<dbReference type="NCBIfam" id="TIGR00390">
    <property type="entry name" value="hslU"/>
    <property type="match status" value="1"/>
</dbReference>
<dbReference type="NCBIfam" id="NF003544">
    <property type="entry name" value="PRK05201.1"/>
    <property type="match status" value="1"/>
</dbReference>
<dbReference type="PANTHER" id="PTHR48102">
    <property type="entry name" value="ATP-DEPENDENT CLP PROTEASE ATP-BINDING SUBUNIT CLPX-LIKE, MITOCHONDRIAL-RELATED"/>
    <property type="match status" value="1"/>
</dbReference>
<dbReference type="PANTHER" id="PTHR48102:SF3">
    <property type="entry name" value="ATP-DEPENDENT PROTEASE ATPASE SUBUNIT HSLU"/>
    <property type="match status" value="1"/>
</dbReference>
<dbReference type="Pfam" id="PF00004">
    <property type="entry name" value="AAA"/>
    <property type="match status" value="1"/>
</dbReference>
<dbReference type="Pfam" id="PF07724">
    <property type="entry name" value="AAA_2"/>
    <property type="match status" value="1"/>
</dbReference>
<dbReference type="SMART" id="SM00382">
    <property type="entry name" value="AAA"/>
    <property type="match status" value="1"/>
</dbReference>
<dbReference type="SMART" id="SM01086">
    <property type="entry name" value="ClpB_D2-small"/>
    <property type="match status" value="1"/>
</dbReference>
<dbReference type="SUPFAM" id="SSF52540">
    <property type="entry name" value="P-loop containing nucleoside triphosphate hydrolases"/>
    <property type="match status" value="1"/>
</dbReference>
<protein>
    <recommendedName>
        <fullName evidence="1">ATP-dependent protease ATPase subunit HslU</fullName>
    </recommendedName>
    <alternativeName>
        <fullName evidence="1">Unfoldase HslU</fullName>
    </alternativeName>
</protein>
<sequence length="455" mass="50690">MPNIDTATMTPREIVQELDRHIVGQHDAKRAVAIALRNRWRRMQLPEELRNEVMPKNILMIGPTGVGKTEIARRLATLANAPFVKVEATRFTEVGYVGKDVEQIIRDLADTSVKLYREQAKVRVRNQAEERAEDRILDALLPRRSAGIGFDPEAARHEPSAQDNETRIKFRRMLRNGELDEREIELEVAVNASMDIMTPPGMEEMGQQLRQMFSNLGGGKSQKRKLTIKAARPLLIEEEAGKLVNEDDIRTAAIEACEQHGIVFIDEIDKVAKRGEAGSSGGDVSREGVQRDLLPLVEGSNVSTKYGTVKTDHILFIASGAFHLAKPSDLIPELQGRFPIRVELTALTKADFVRILTEPKAALIKQYEALLQTEGVALTFGADAVDRLAEIAAQVNERQENIGARRLHTVLERLLDVLSYEAPDRDGQSVTVDAAYVDAQLGELVQDPDLSRYIL</sequence>
<evidence type="ECO:0000255" key="1">
    <source>
        <dbReference type="HAMAP-Rule" id="MF_00249"/>
    </source>
</evidence>
<gene>
    <name evidence="1" type="primary">hslU</name>
    <name type="ordered locus">XC_0668</name>
</gene>
<reference key="1">
    <citation type="journal article" date="2005" name="Genome Res.">
        <title>Comparative and functional genomic analyses of the pathogenicity of phytopathogen Xanthomonas campestris pv. campestris.</title>
        <authorList>
            <person name="Qian W."/>
            <person name="Jia Y."/>
            <person name="Ren S.-X."/>
            <person name="He Y.-Q."/>
            <person name="Feng J.-X."/>
            <person name="Lu L.-F."/>
            <person name="Sun Q."/>
            <person name="Ying G."/>
            <person name="Tang D.-J."/>
            <person name="Tang H."/>
            <person name="Wu W."/>
            <person name="Hao P."/>
            <person name="Wang L."/>
            <person name="Jiang B.-L."/>
            <person name="Zeng S."/>
            <person name="Gu W.-Y."/>
            <person name="Lu G."/>
            <person name="Rong L."/>
            <person name="Tian Y."/>
            <person name="Yao Z."/>
            <person name="Fu G."/>
            <person name="Chen B."/>
            <person name="Fang R."/>
            <person name="Qiang B."/>
            <person name="Chen Z."/>
            <person name="Zhao G.-P."/>
            <person name="Tang J.-L."/>
            <person name="He C."/>
        </authorList>
    </citation>
    <scope>NUCLEOTIDE SEQUENCE [LARGE SCALE GENOMIC DNA]</scope>
    <source>
        <strain>8004</strain>
    </source>
</reference>
<proteinExistence type="inferred from homology"/>